<organism>
    <name type="scientific">Pectobacterium atrosepticum (strain SCRI 1043 / ATCC BAA-672)</name>
    <name type="common">Erwinia carotovora subsp. atroseptica</name>
    <dbReference type="NCBI Taxonomy" id="218491"/>
    <lineage>
        <taxon>Bacteria</taxon>
        <taxon>Pseudomonadati</taxon>
        <taxon>Pseudomonadota</taxon>
        <taxon>Gammaproteobacteria</taxon>
        <taxon>Enterobacterales</taxon>
        <taxon>Pectobacteriaceae</taxon>
        <taxon>Pectobacterium</taxon>
    </lineage>
</organism>
<comment type="function">
    <text evidence="1">Condensation of UDP-2,3-diacylglucosamine and 2,3-diacylglucosamine-1-phosphate to form lipid A disaccharide, a precursor of lipid A, a phosphorylated glycolipid that anchors the lipopolysaccharide to the outer membrane of the cell.</text>
</comment>
<comment type="catalytic activity">
    <reaction evidence="1">
        <text>2-N,3-O-bis[(3R)-3-hydroxytetradecanoyl]-alpha-D-glucosaminyl 1-phosphate + UDP-2-N,3-O-bis[(3R)-3-hydroxytetradecanoyl]-alpha-D-glucosamine = lipid A disaccharide (E. coli) + UDP + H(+)</text>
        <dbReference type="Rhea" id="RHEA:22668"/>
        <dbReference type="ChEBI" id="CHEBI:15378"/>
        <dbReference type="ChEBI" id="CHEBI:57957"/>
        <dbReference type="ChEBI" id="CHEBI:58223"/>
        <dbReference type="ChEBI" id="CHEBI:58466"/>
        <dbReference type="ChEBI" id="CHEBI:78847"/>
    </reaction>
</comment>
<comment type="catalytic activity">
    <reaction evidence="1">
        <text>a lipid X + a UDP-2-N,3-O-bis[(3R)-3-hydroxyacyl]-alpha-D-glucosamine = a lipid A disaccharide + UDP + H(+)</text>
        <dbReference type="Rhea" id="RHEA:67828"/>
        <dbReference type="ChEBI" id="CHEBI:15378"/>
        <dbReference type="ChEBI" id="CHEBI:58223"/>
        <dbReference type="ChEBI" id="CHEBI:137748"/>
        <dbReference type="ChEBI" id="CHEBI:176338"/>
        <dbReference type="ChEBI" id="CHEBI:176343"/>
        <dbReference type="EC" id="2.4.1.182"/>
    </reaction>
</comment>
<comment type="pathway">
    <text evidence="1">Glycolipid biosynthesis; lipid IV(A) biosynthesis; lipid IV(A) from (3R)-3-hydroxytetradecanoyl-[acyl-carrier-protein] and UDP-N-acetyl-alpha-D-glucosamine: step 5/6.</text>
</comment>
<comment type="similarity">
    <text evidence="1">Belongs to the LpxB family.</text>
</comment>
<protein>
    <recommendedName>
        <fullName evidence="1">Lipid-A-disaccharide synthase</fullName>
        <ecNumber evidence="1">2.4.1.182</ecNumber>
    </recommendedName>
</protein>
<reference key="1">
    <citation type="journal article" date="2004" name="Proc. Natl. Acad. Sci. U.S.A.">
        <title>Genome sequence of the enterobacterial phytopathogen Erwinia carotovora subsp. atroseptica and characterization of virulence factors.</title>
        <authorList>
            <person name="Bell K.S."/>
            <person name="Sebaihia M."/>
            <person name="Pritchard L."/>
            <person name="Holden M.T.G."/>
            <person name="Hyman L.J."/>
            <person name="Holeva M.C."/>
            <person name="Thomson N.R."/>
            <person name="Bentley S.D."/>
            <person name="Churcher L.J.C."/>
            <person name="Mungall K."/>
            <person name="Atkin R."/>
            <person name="Bason N."/>
            <person name="Brooks K."/>
            <person name="Chillingworth T."/>
            <person name="Clark K."/>
            <person name="Doggett J."/>
            <person name="Fraser A."/>
            <person name="Hance Z."/>
            <person name="Hauser H."/>
            <person name="Jagels K."/>
            <person name="Moule S."/>
            <person name="Norbertczak H."/>
            <person name="Ormond D."/>
            <person name="Price C."/>
            <person name="Quail M.A."/>
            <person name="Sanders M."/>
            <person name="Walker D."/>
            <person name="Whitehead S."/>
            <person name="Salmond G.P.C."/>
            <person name="Birch P.R.J."/>
            <person name="Parkhill J."/>
            <person name="Toth I.K."/>
        </authorList>
    </citation>
    <scope>NUCLEOTIDE SEQUENCE [LARGE SCALE GENOMIC DNA]</scope>
    <source>
        <strain>SCRI 1043 / ATCC BAA-672</strain>
    </source>
</reference>
<proteinExistence type="inferred from homology"/>
<name>LPXB_PECAS</name>
<feature type="chain" id="PRO_0000255178" description="Lipid-A-disaccharide synthase">
    <location>
        <begin position="1"/>
        <end position="383"/>
    </location>
</feature>
<evidence type="ECO:0000255" key="1">
    <source>
        <dbReference type="HAMAP-Rule" id="MF_00392"/>
    </source>
</evidence>
<accession>Q6D8D0</accession>
<dbReference type="EC" id="2.4.1.182" evidence="1"/>
<dbReference type="EMBL" id="BX950851">
    <property type="protein sequence ID" value="CAG73955.1"/>
    <property type="molecule type" value="Genomic_DNA"/>
</dbReference>
<dbReference type="RefSeq" id="WP_011092642.1">
    <property type="nucleotide sequence ID" value="NC_004547.2"/>
</dbReference>
<dbReference type="SMR" id="Q6D8D0"/>
<dbReference type="STRING" id="218491.ECA1044"/>
<dbReference type="CAZy" id="GT19">
    <property type="family name" value="Glycosyltransferase Family 19"/>
</dbReference>
<dbReference type="GeneID" id="57207873"/>
<dbReference type="KEGG" id="eca:ECA1044"/>
<dbReference type="PATRIC" id="fig|218491.5.peg.1052"/>
<dbReference type="eggNOG" id="COG0763">
    <property type="taxonomic scope" value="Bacteria"/>
</dbReference>
<dbReference type="HOGENOM" id="CLU_036577_3_0_6"/>
<dbReference type="OrthoDB" id="9801642at2"/>
<dbReference type="UniPathway" id="UPA00359">
    <property type="reaction ID" value="UER00481"/>
</dbReference>
<dbReference type="Proteomes" id="UP000007966">
    <property type="component" value="Chromosome"/>
</dbReference>
<dbReference type="GO" id="GO:0016020">
    <property type="term" value="C:membrane"/>
    <property type="evidence" value="ECO:0007669"/>
    <property type="project" value="GOC"/>
</dbReference>
<dbReference type="GO" id="GO:0008915">
    <property type="term" value="F:lipid-A-disaccharide synthase activity"/>
    <property type="evidence" value="ECO:0007669"/>
    <property type="project" value="UniProtKB-UniRule"/>
</dbReference>
<dbReference type="GO" id="GO:0005543">
    <property type="term" value="F:phospholipid binding"/>
    <property type="evidence" value="ECO:0007669"/>
    <property type="project" value="TreeGrafter"/>
</dbReference>
<dbReference type="GO" id="GO:0009245">
    <property type="term" value="P:lipid A biosynthetic process"/>
    <property type="evidence" value="ECO:0007669"/>
    <property type="project" value="UniProtKB-UniRule"/>
</dbReference>
<dbReference type="CDD" id="cd01635">
    <property type="entry name" value="Glycosyltransferase_GTB-type"/>
    <property type="match status" value="1"/>
</dbReference>
<dbReference type="HAMAP" id="MF_00392">
    <property type="entry name" value="LpxB"/>
    <property type="match status" value="1"/>
</dbReference>
<dbReference type="InterPro" id="IPR003835">
    <property type="entry name" value="Glyco_trans_19"/>
</dbReference>
<dbReference type="NCBIfam" id="TIGR00215">
    <property type="entry name" value="lpxB"/>
    <property type="match status" value="1"/>
</dbReference>
<dbReference type="PANTHER" id="PTHR30372">
    <property type="entry name" value="LIPID-A-DISACCHARIDE SYNTHASE"/>
    <property type="match status" value="1"/>
</dbReference>
<dbReference type="PANTHER" id="PTHR30372:SF4">
    <property type="entry name" value="LIPID-A-DISACCHARIDE SYNTHASE, MITOCHONDRIAL-RELATED"/>
    <property type="match status" value="1"/>
</dbReference>
<dbReference type="Pfam" id="PF02684">
    <property type="entry name" value="LpxB"/>
    <property type="match status" value="1"/>
</dbReference>
<dbReference type="SUPFAM" id="SSF53756">
    <property type="entry name" value="UDP-Glycosyltransferase/glycogen phosphorylase"/>
    <property type="match status" value="1"/>
</dbReference>
<gene>
    <name evidence="1" type="primary">lpxB</name>
    <name type="ordered locus">ECA1044</name>
</gene>
<keyword id="KW-0328">Glycosyltransferase</keyword>
<keyword id="KW-0441">Lipid A biosynthesis</keyword>
<keyword id="KW-0444">Lipid biosynthesis</keyword>
<keyword id="KW-0443">Lipid metabolism</keyword>
<keyword id="KW-1185">Reference proteome</keyword>
<keyword id="KW-0808">Transferase</keyword>
<sequence length="383" mass="42359">MSSRPLTIGLVAGETSGDILGAGLIRALKEKVPGARFVGVAGPRMQAEGCEAWYEMEELAVMGIVEVLGRLPRLLKIRRDLTQRFSELQPDVFVGIDAPDFNITLEGNLKQHGINTIHYVSPSVWAWRQKRVFKIGKATNLVLAFLPFEKAFYDRFNVPCRFIGHTMADAMPLHPDKMTARATLGIAPDAHCLALLPGSRGAEVEMLSADFLNTAVLLRQHFPDLEIVVPLVNSKRREQFERIKSSVAPDLRVHLLDGQAREAMIASDAALLASGTAALECMLAKCPMVVGYRMKPFTFWLAQRLVKTPWVSLPNLLAGRELVTELLQTDCTPDKLAAALLPLFADTDKMAELRTTFVDLHQQIRCNADEQAAQAVLELVTPR</sequence>